<proteinExistence type="inferred from homology"/>
<accession>Q8DRB1</accession>
<evidence type="ECO:0000255" key="1"/>
<evidence type="ECO:0000255" key="2">
    <source>
        <dbReference type="PROSITE-ProRule" id="PRU10095"/>
    </source>
</evidence>
<evidence type="ECO:0000305" key="3"/>
<feature type="chain" id="PRO_0000088467" description="Putative zinc metalloprotease spr0242">
    <location>
        <begin position="1"/>
        <end position="419"/>
    </location>
</feature>
<feature type="transmembrane region" description="Helical" evidence="1">
    <location>
        <begin position="169"/>
        <end position="191"/>
    </location>
</feature>
<feature type="transmembrane region" description="Helical" evidence="1">
    <location>
        <begin position="345"/>
        <end position="367"/>
    </location>
</feature>
<feature type="transmembrane region" description="Helical" evidence="1">
    <location>
        <begin position="388"/>
        <end position="410"/>
    </location>
</feature>
<feature type="active site" evidence="2">
    <location>
        <position position="19"/>
    </location>
</feature>
<feature type="binding site" evidence="2">
    <location>
        <position position="18"/>
    </location>
    <ligand>
        <name>Zn(2+)</name>
        <dbReference type="ChEBI" id="CHEBI:29105"/>
        <note>catalytic</note>
    </ligand>
</feature>
<feature type="binding site" evidence="2">
    <location>
        <position position="22"/>
    </location>
    <ligand>
        <name>Zn(2+)</name>
        <dbReference type="ChEBI" id="CHEBI:29105"/>
        <note>catalytic</note>
    </ligand>
</feature>
<name>Y242_STRR6</name>
<sequence>MLGILTFILVFGIIVVVHEFGHFYFAKKSGILVREFAIGMGPKIFAHIGKDGTAYTIRILPLGGYVRMAGWGDDTTEIKTGTPVSLTLADDGKVKRINLSGKKLDQTALPMQVTQFDFEDKLFIKGLVLEEEKTFAVDHDATVVEADGTEVRIAPLDVQYQNATIWGKLITNFAGPMNNFILGVVVFWVLIFMQGGVRDVDTNQFHIMPQGALAKVGVPETAQITKIGSHEVSNWESLIQAVETETKDKTAPTLDVTISEKGSDKQVTVTPEDSQGRYLLGVQPGVKSDFLSMFVGGFTTAADSALRILSALKNLIFQPDLNKLGGPVAIFKASSDAAKNGIENILYFLAMISINIGIFNLIPIPALDGGKIVLNILEAIRRKPLKQEIETYVTLAGVVIMVVLMIAVTWNDIMRLFFR</sequence>
<gene>
    <name type="ordered locus">spr0242</name>
</gene>
<reference key="1">
    <citation type="journal article" date="2001" name="J. Bacteriol.">
        <title>Genome of the bacterium Streptococcus pneumoniae strain R6.</title>
        <authorList>
            <person name="Hoskins J."/>
            <person name="Alborn W.E. Jr."/>
            <person name="Arnold J."/>
            <person name="Blaszczak L.C."/>
            <person name="Burgett S."/>
            <person name="DeHoff B.S."/>
            <person name="Estrem S.T."/>
            <person name="Fritz L."/>
            <person name="Fu D.-J."/>
            <person name="Fuller W."/>
            <person name="Geringer C."/>
            <person name="Gilmour R."/>
            <person name="Glass J.S."/>
            <person name="Khoja H."/>
            <person name="Kraft A.R."/>
            <person name="Lagace R.E."/>
            <person name="LeBlanc D.J."/>
            <person name="Lee L.N."/>
            <person name="Lefkowitz E.J."/>
            <person name="Lu J."/>
            <person name="Matsushima P."/>
            <person name="McAhren S.M."/>
            <person name="McHenney M."/>
            <person name="McLeaster K."/>
            <person name="Mundy C.W."/>
            <person name="Nicas T.I."/>
            <person name="Norris F.H."/>
            <person name="O'Gara M."/>
            <person name="Peery R.B."/>
            <person name="Robertson G.T."/>
            <person name="Rockey P."/>
            <person name="Sun P.-M."/>
            <person name="Winkler M.E."/>
            <person name="Yang Y."/>
            <person name="Young-Bellido M."/>
            <person name="Zhao G."/>
            <person name="Zook C.A."/>
            <person name="Baltz R.H."/>
            <person name="Jaskunas S.R."/>
            <person name="Rosteck P.R. Jr."/>
            <person name="Skatrud P.L."/>
            <person name="Glass J.I."/>
        </authorList>
    </citation>
    <scope>NUCLEOTIDE SEQUENCE [LARGE SCALE GENOMIC DNA]</scope>
    <source>
        <strain>ATCC BAA-255 / R6</strain>
    </source>
</reference>
<dbReference type="EC" id="3.4.24.-"/>
<dbReference type="EMBL" id="AE007317">
    <property type="protein sequence ID" value="AAK99046.1"/>
    <property type="molecule type" value="Genomic_DNA"/>
</dbReference>
<dbReference type="PIR" id="B97902">
    <property type="entry name" value="B97902"/>
</dbReference>
<dbReference type="RefSeq" id="NP_357836.1">
    <property type="nucleotide sequence ID" value="NC_003098.1"/>
</dbReference>
<dbReference type="SMR" id="Q8DRB1"/>
<dbReference type="STRING" id="171101.spr0242"/>
<dbReference type="KEGG" id="spr:spr0242"/>
<dbReference type="PATRIC" id="fig|171101.6.peg.276"/>
<dbReference type="eggNOG" id="COG0750">
    <property type="taxonomic scope" value="Bacteria"/>
</dbReference>
<dbReference type="HOGENOM" id="CLU_025778_1_3_9"/>
<dbReference type="Proteomes" id="UP000000586">
    <property type="component" value="Chromosome"/>
</dbReference>
<dbReference type="GO" id="GO:0005886">
    <property type="term" value="C:plasma membrane"/>
    <property type="evidence" value="ECO:0007669"/>
    <property type="project" value="UniProtKB-SubCell"/>
</dbReference>
<dbReference type="GO" id="GO:0046872">
    <property type="term" value="F:metal ion binding"/>
    <property type="evidence" value="ECO:0007669"/>
    <property type="project" value="UniProtKB-KW"/>
</dbReference>
<dbReference type="GO" id="GO:0004222">
    <property type="term" value="F:metalloendopeptidase activity"/>
    <property type="evidence" value="ECO:0007669"/>
    <property type="project" value="InterPro"/>
</dbReference>
<dbReference type="GO" id="GO:0006508">
    <property type="term" value="P:proteolysis"/>
    <property type="evidence" value="ECO:0007669"/>
    <property type="project" value="UniProtKB-KW"/>
</dbReference>
<dbReference type="CDD" id="cd06163">
    <property type="entry name" value="S2P-M50_PDZ_RseP-like"/>
    <property type="match status" value="1"/>
</dbReference>
<dbReference type="Gene3D" id="2.30.42.10">
    <property type="match status" value="1"/>
</dbReference>
<dbReference type="InterPro" id="IPR036034">
    <property type="entry name" value="PDZ_sf"/>
</dbReference>
<dbReference type="InterPro" id="IPR004387">
    <property type="entry name" value="Pept_M50_Zn"/>
</dbReference>
<dbReference type="InterPro" id="IPR008915">
    <property type="entry name" value="Peptidase_M50"/>
</dbReference>
<dbReference type="NCBIfam" id="TIGR00054">
    <property type="entry name" value="RIP metalloprotease RseP"/>
    <property type="match status" value="1"/>
</dbReference>
<dbReference type="PANTHER" id="PTHR42837:SF2">
    <property type="entry name" value="MEMBRANE METALLOPROTEASE ARASP2, CHLOROPLASTIC-RELATED"/>
    <property type="match status" value="1"/>
</dbReference>
<dbReference type="PANTHER" id="PTHR42837">
    <property type="entry name" value="REGULATOR OF SIGMA-E PROTEASE RSEP"/>
    <property type="match status" value="1"/>
</dbReference>
<dbReference type="Pfam" id="PF02163">
    <property type="entry name" value="Peptidase_M50"/>
    <property type="match status" value="1"/>
</dbReference>
<dbReference type="PROSITE" id="PS00142">
    <property type="entry name" value="ZINC_PROTEASE"/>
    <property type="match status" value="1"/>
</dbReference>
<organism>
    <name type="scientific">Streptococcus pneumoniae (strain ATCC BAA-255 / R6)</name>
    <dbReference type="NCBI Taxonomy" id="171101"/>
    <lineage>
        <taxon>Bacteria</taxon>
        <taxon>Bacillati</taxon>
        <taxon>Bacillota</taxon>
        <taxon>Bacilli</taxon>
        <taxon>Lactobacillales</taxon>
        <taxon>Streptococcaceae</taxon>
        <taxon>Streptococcus</taxon>
    </lineage>
</organism>
<comment type="cofactor">
    <cofactor evidence="3">
        <name>Zn(2+)</name>
        <dbReference type="ChEBI" id="CHEBI:29105"/>
    </cofactor>
</comment>
<comment type="subcellular location">
    <subcellularLocation>
        <location evidence="3">Cell membrane</location>
        <topology evidence="3">Multi-pass membrane protein</topology>
    </subcellularLocation>
</comment>
<comment type="similarity">
    <text evidence="3">Belongs to the peptidase M50B family.</text>
</comment>
<protein>
    <recommendedName>
        <fullName>Putative zinc metalloprotease spr0242</fullName>
        <ecNumber>3.4.24.-</ecNumber>
    </recommendedName>
</protein>
<keyword id="KW-1003">Cell membrane</keyword>
<keyword id="KW-0378">Hydrolase</keyword>
<keyword id="KW-0472">Membrane</keyword>
<keyword id="KW-0479">Metal-binding</keyword>
<keyword id="KW-0482">Metalloprotease</keyword>
<keyword id="KW-0645">Protease</keyword>
<keyword id="KW-1185">Reference proteome</keyword>
<keyword id="KW-0812">Transmembrane</keyword>
<keyword id="KW-1133">Transmembrane helix</keyword>
<keyword id="KW-0862">Zinc</keyword>